<reference key="1">
    <citation type="journal article" date="1995" name="Comp. Biochem. Physiol.">
        <title>Species-specific expression of cytochrome c oxidase isozymes.</title>
        <authorList>
            <person name="Linder D."/>
            <person name="Freund R."/>
            <person name="Kadenbach B."/>
        </authorList>
    </citation>
    <scope>PROTEIN SEQUENCE</scope>
    <source>
        <tissue>Liver</tissue>
    </source>
</reference>
<keyword id="KW-0903">Direct protein sequencing</keyword>
<keyword id="KW-0472">Membrane</keyword>
<keyword id="KW-0496">Mitochondrion</keyword>
<keyword id="KW-0999">Mitochondrion inner membrane</keyword>
<keyword id="KW-0560">Oxidoreductase</keyword>
<keyword id="KW-1185">Reference proteome</keyword>
<keyword id="KW-0812">Transmembrane</keyword>
<keyword id="KW-1133">Transmembrane helix</keyword>
<protein>
    <recommendedName>
        <fullName>Cytochrome c oxidase subunit 6A1, mitochondrial</fullName>
    </recommendedName>
    <alternativeName>
        <fullName>Cytochrome c oxidase polypeptide VIa-liver</fullName>
    </alternativeName>
</protein>
<dbReference type="PaxDb" id="9612-ENSCAFP00000042210"/>
<dbReference type="eggNOG" id="KOG3469">
    <property type="taxonomic scope" value="Eukaryota"/>
</dbReference>
<dbReference type="InParanoid" id="P61902"/>
<dbReference type="UniPathway" id="UPA00705"/>
<dbReference type="Proteomes" id="UP000002254">
    <property type="component" value="Unplaced"/>
</dbReference>
<dbReference type="Proteomes" id="UP000694429">
    <property type="component" value="Unplaced"/>
</dbReference>
<dbReference type="Proteomes" id="UP000694542">
    <property type="component" value="Unplaced"/>
</dbReference>
<dbReference type="Proteomes" id="UP000805418">
    <property type="component" value="Unplaced"/>
</dbReference>
<dbReference type="GO" id="GO:0005743">
    <property type="term" value="C:mitochondrial inner membrane"/>
    <property type="evidence" value="ECO:0007669"/>
    <property type="project" value="UniProtKB-SubCell"/>
</dbReference>
<dbReference type="GO" id="GO:0016491">
    <property type="term" value="F:oxidoreductase activity"/>
    <property type="evidence" value="ECO:0007669"/>
    <property type="project" value="UniProtKB-KW"/>
</dbReference>
<dbReference type="GO" id="GO:0006119">
    <property type="term" value="P:oxidative phosphorylation"/>
    <property type="evidence" value="ECO:0007669"/>
    <property type="project" value="UniProtKB-UniPathway"/>
</dbReference>
<proteinExistence type="evidence at protein level"/>
<feature type="chain" id="PRO_0000193448" description="Cytochrome c oxidase subunit 6A1, mitochondrial">
    <location>
        <begin position="1"/>
        <end position="20" status="greater than"/>
    </location>
</feature>
<feature type="non-terminal residue">
    <location>
        <position position="20"/>
    </location>
</feature>
<sequence length="20" mass="2111">SSGAHGEEGSARMXKALTYF</sequence>
<name>CX6A1_CANLF</name>
<accession>P61902</accession>
<accession>Q9TR33</accession>
<evidence type="ECO:0000250" key="1">
    <source>
        <dbReference type="UniProtKB" id="P12074"/>
    </source>
</evidence>
<evidence type="ECO:0000250" key="2">
    <source>
        <dbReference type="UniProtKB" id="P32799"/>
    </source>
</evidence>
<evidence type="ECO:0000305" key="3"/>
<gene>
    <name type="primary">COX6A1</name>
</gene>
<organism>
    <name type="scientific">Canis lupus familiaris</name>
    <name type="common">Dog</name>
    <name type="synonym">Canis familiaris</name>
    <dbReference type="NCBI Taxonomy" id="9615"/>
    <lineage>
        <taxon>Eukaryota</taxon>
        <taxon>Metazoa</taxon>
        <taxon>Chordata</taxon>
        <taxon>Craniata</taxon>
        <taxon>Vertebrata</taxon>
        <taxon>Euteleostomi</taxon>
        <taxon>Mammalia</taxon>
        <taxon>Eutheria</taxon>
        <taxon>Laurasiatheria</taxon>
        <taxon>Carnivora</taxon>
        <taxon>Caniformia</taxon>
        <taxon>Canidae</taxon>
        <taxon>Canis</taxon>
    </lineage>
</organism>
<comment type="function">
    <text evidence="2">Component of the cytochrome c oxidase, the last enzyme in the mitochondrial electron transport chain which drives oxidative phosphorylation. The respiratory chain contains 3 multisubunit complexes succinate dehydrogenase (complex II, CII), ubiquinol-cytochrome c oxidoreductase (cytochrome b-c1 complex, complex III, CIII) and cytochrome c oxidase (complex IV, CIV), that cooperate to transfer electrons derived from NADH and succinate to molecular oxygen, creating an electrochemical gradient over the inner membrane that drives transmembrane transport and the ATP synthase. Cytochrome c oxidase is the component of the respiratory chain that catalyzes the reduction of oxygen to water. Electrons originating from reduced cytochrome c in the intermembrane space (IMS) are transferred via the dinuclear copper A center (CU(A)) of subunit 2 and heme A of subunit 1 to the active site in subunit 1, a binuclear center (BNC) formed by heme A3 and copper B (CU(B)). The BNC reduces molecular oxygen to 2 water molecules unsing 4 electrons from cytochrome c in the IMS and 4 protons from the mitochondrial matrix.</text>
</comment>
<comment type="pathway">
    <text evidence="2">Energy metabolism; oxidative phosphorylation.</text>
</comment>
<comment type="subunit">
    <text evidence="1">Component of the cytochrome c oxidase (complex IV, CIV), a multisubunit enzyme composed of 14 subunits. The complex is composed of a catalytic core of 3 subunits MT-CO1, MT-CO2 and MT-CO3, encoded in the mitochondrial DNA, and 11 supernumerary subunits COX4I, COX5A, COX5B, COX6A, COX6B, COX6C, COX7A, COX7B, COX7C, COX8 and NDUFA4, which are encoded in the nuclear genome. The complex exists as a monomer or a dimer and forms supercomplexes (SCs) in the inner mitochondrial membrane with NADH-ubiquinone oxidoreductase (complex I, CI) and ubiquinol-cytochrome c oxidoreductase (cytochrome b-c1 complex, complex III, CIII), resulting in different assemblies (supercomplex SCI(1)III(2)IV(1) and megacomplex MCI(2)III(2)IV(2)).</text>
</comment>
<comment type="subcellular location">
    <subcellularLocation>
        <location evidence="1">Mitochondrion inner membrane</location>
        <topology evidence="1">Single-pass membrane protein</topology>
    </subcellularLocation>
</comment>
<comment type="tissue specificity">
    <text>Liver specific isoform.</text>
</comment>
<comment type="similarity">
    <text evidence="3">Belongs to the cytochrome c oxidase subunit 6A family.</text>
</comment>